<protein>
    <recommendedName>
        <fullName>Gag-Pol polyprotein</fullName>
    </recommendedName>
    <alternativeName>
        <fullName>Pr160Gag-Pol</fullName>
    </alternativeName>
    <component>
        <recommendedName>
            <fullName>Matrix protein p17</fullName>
            <shortName>MA</shortName>
        </recommendedName>
    </component>
    <component>
        <recommendedName>
            <fullName>Capsid protein p24</fullName>
            <shortName>CA</shortName>
        </recommendedName>
    </component>
    <component>
        <recommendedName>
            <fullName evidence="7">Spacer peptide 1</fullName>
            <shortName>SP1</shortName>
        </recommendedName>
        <alternativeName>
            <fullName>p2</fullName>
        </alternativeName>
    </component>
    <component>
        <recommendedName>
            <fullName>Nucleocapsid protein p7</fullName>
            <shortName>NC</shortName>
        </recommendedName>
    </component>
    <component>
        <recommendedName>
            <fullName>Transframe peptide</fullName>
            <shortName>TF</shortName>
        </recommendedName>
    </component>
    <component>
        <recommendedName>
            <fullName>p6-pol</fullName>
            <shortName>p6*</shortName>
        </recommendedName>
    </component>
    <component>
        <recommendedName>
            <fullName>Protease</fullName>
            <ecNumber>3.4.23.16</ecNumber>
        </recommendedName>
        <alternativeName>
            <fullName>PR</fullName>
        </alternativeName>
        <alternativeName>
            <fullName>Retropepsin</fullName>
        </alternativeName>
    </component>
    <component>
        <recommendedName>
            <fullName>Reverse transcriptase/ribonuclease H</fullName>
            <ecNumber>2.7.7.49</ecNumber>
            <ecNumber>2.7.7.7</ecNumber>
            <ecNumber>3.1.26.13</ecNumber>
        </recommendedName>
        <alternativeName>
            <fullName>Exoribonuclease H</fullName>
            <ecNumber>3.1.13.2</ecNumber>
        </alternativeName>
        <alternativeName>
            <fullName>p66 RT</fullName>
        </alternativeName>
    </component>
    <component>
        <recommendedName>
            <fullName>p51 RT</fullName>
        </recommendedName>
    </component>
    <component>
        <recommendedName>
            <fullName>p15</fullName>
        </recommendedName>
    </component>
    <component>
        <recommendedName>
            <fullName>Integrase</fullName>
            <shortName>IN</shortName>
            <ecNumber evidence="5">2.7.7.-</ecNumber>
            <ecNumber evidence="5">3.1.-.-</ecNumber>
        </recommendedName>
    </component>
</protein>
<proteinExistence type="inferred from homology"/>
<reference key="1">
    <citation type="journal article" date="2000" name="AIDS">
        <title>HIV-1 subtype H near-full length genome reference strains and analysis of subtype-H-containing inter-subtype recombinants.</title>
        <authorList>
            <person name="Janssens W."/>
            <person name="Laukkanen T."/>
            <person name="Salminen M.O."/>
            <person name="Carr J.K."/>
            <person name="Van der Auwera G."/>
            <person name="Heyndrickx L."/>
            <person name="van der Groen G."/>
            <person name="McCutchan F.E."/>
        </authorList>
    </citation>
    <scope>NUCLEOTIDE SEQUENCE [GENOMIC DNA]</scope>
</reference>
<organism>
    <name type="scientific">Human immunodeficiency virus type 1 group M subtype H (isolate VI991)</name>
    <name type="common">HIV-1</name>
    <dbReference type="NCBI Taxonomy" id="388888"/>
    <lineage>
        <taxon>Viruses</taxon>
        <taxon>Riboviria</taxon>
        <taxon>Pararnavirae</taxon>
        <taxon>Artverviricota</taxon>
        <taxon>Revtraviricetes</taxon>
        <taxon>Ortervirales</taxon>
        <taxon>Retroviridae</taxon>
        <taxon>Orthoretrovirinae</taxon>
        <taxon>Lentivirus</taxon>
        <taxon>Human immunodeficiency virus type 1</taxon>
    </lineage>
</organism>
<organismHost>
    <name type="scientific">Homo sapiens</name>
    <name type="common">Human</name>
    <dbReference type="NCBI Taxonomy" id="9606"/>
</organismHost>
<sequence>MGARASVLSGGKLDAWEKIRLRPGGRKKYRLKHLVWASRELERFALNPDLLETADGCQQILGQLQPALKTGTEDLQSLYNTIAVLYCVHQRIDVKDTKEALGKIEEIQNKNKQRTQQAPAAADKEKDSKISQNYPIVQNAQGQMVHQAISPRTLNAWVKVVEEKAFSPEVIPMFSALSEGATPQDLNAMLNTVGGHQAAMQMLKDTINEEAAEWDRLHPVHAGPIPPGQMREPRGSDIAGTTSTLQEQVAWMTGNPPIPVGDIYKRWIILGLNKIVRMYSPVSILDIKQGPKEPFRDYVDRFFRVLRAEQATQDVKNWMTDTLLVQNANPDCRTILKALGRGASIEEMMTACQGVGGPSHKARVLAEAMSQVTNASAAIMMQKGNFKGPRRTVKCSNCGKEGHIARNCRAPRKKGCWKCGQEGHQMKDCTGRQANFFRENLAFQQGKAREFPPEEARANSPTSRELRVRRGDHPLSEAGAERTGTSFNFPQITLWQRPIVTVKIEGQLKEALLDTGADDTVLEDINLPGKWKPKMIGGIGGFIKVRQYEQVAIEIFGKKAIGTVLVGPTPVNIIGRNILTQMGCTLNLPISPIETVPVTLKPGMDGPKVKQWPLTEEKIKALTEICLEMEKEGKISKIGPENPYNTPIFAIKKKNSTRWRKLVDFRELNKRTQDFWEVQLGIPHPAGLKKKKSVSVLDVGGAYFSVPLHEDFRKYTAFTIPSTNNETPGIRYQYNVLPQGWKGSPAIFQSSMTKILEPFRKQNPEVIIYQYMDDLYVGSDLEIGQHREKIEELRAHLLRWGFTTPDQKHQKEPPFLWMGYELHPDKWTVQPVKLPEKDSWTVNDIQKLVGKLNWASQIYPGIKVKQLCXLLRGAKALTEIVPLTKEAELELAENREILKEPVHGAYYDPSKELIAEIQKQGPDQWTYQIYQEPFKNLKTGKYAKMRSAHTNDVKQLTEVVQKIATESIVIWGKIPKFRLPIQKETWETWWTEHWQATWIPEWEFVNTPHLVKLWYQLETEPIEGAETYYVDGAANRETKMGKAGYVTDRGKQKIVSLTETTNQKTELQAIYLALQESGPEVNIVTDSQYALGIIQAQPDKSESELVNQIIEELIKKEKFYLSWVPAHKGIGGNEQVDKLVSSGIRKVLFLDGIDKAQVQHEKYHSNWRAMASDFNLPPIVAKEIVASCDKCQLKGEAMHGQVDCSPGIWQLDCTHLEGKIILVAVHVASGYIEAEVIPAETGQETAYFILKLAGRWPVKMIHTDNGSNFTSAAVKAACWWADIHQEFGIPYNPQSQGVVESMNKELKKIIGQVRDQAEHLRTAVQMAVFIHNFKRKGGIGGYSARERIIDIIATDIPTKELQKQISQIQKFRVYYRDSRDPIWKGPAKLLWKGEGAVVIQDNSEIKVVPRRKAKIIRDYGKQMAGDDCVAGRQDED</sequence>
<dbReference type="EC" id="3.4.23.16"/>
<dbReference type="EC" id="2.7.7.49"/>
<dbReference type="EC" id="2.7.7.7"/>
<dbReference type="EC" id="3.1.26.13"/>
<dbReference type="EC" id="3.1.13.2"/>
<dbReference type="EC" id="2.7.7.-" evidence="5"/>
<dbReference type="EC" id="3.1.-.-" evidence="5"/>
<dbReference type="EMBL" id="AF190127">
    <property type="protein sequence ID" value="AAF18397.1"/>
    <property type="status" value="ALT_SEQ"/>
    <property type="molecule type" value="Genomic_DNA"/>
</dbReference>
<dbReference type="MEROPS" id="A02.001"/>
<dbReference type="PRO" id="PR:Q9Q720"/>
<dbReference type="Proteomes" id="UP000150531">
    <property type="component" value="Segment"/>
</dbReference>
<dbReference type="GO" id="GO:0043657">
    <property type="term" value="C:host cell"/>
    <property type="evidence" value="ECO:0007669"/>
    <property type="project" value="GOC"/>
</dbReference>
<dbReference type="GO" id="GO:0042025">
    <property type="term" value="C:host cell nucleus"/>
    <property type="evidence" value="ECO:0007669"/>
    <property type="project" value="UniProtKB-SubCell"/>
</dbReference>
<dbReference type="GO" id="GO:0020002">
    <property type="term" value="C:host cell plasma membrane"/>
    <property type="evidence" value="ECO:0007669"/>
    <property type="project" value="UniProtKB-SubCell"/>
</dbReference>
<dbReference type="GO" id="GO:0072494">
    <property type="term" value="C:host multivesicular body"/>
    <property type="evidence" value="ECO:0007669"/>
    <property type="project" value="UniProtKB-SubCell"/>
</dbReference>
<dbReference type="GO" id="GO:0016020">
    <property type="term" value="C:membrane"/>
    <property type="evidence" value="ECO:0007669"/>
    <property type="project" value="UniProtKB-KW"/>
</dbReference>
<dbReference type="GO" id="GO:0019013">
    <property type="term" value="C:viral nucleocapsid"/>
    <property type="evidence" value="ECO:0007669"/>
    <property type="project" value="UniProtKB-KW"/>
</dbReference>
<dbReference type="GO" id="GO:0055036">
    <property type="term" value="C:virion membrane"/>
    <property type="evidence" value="ECO:0007669"/>
    <property type="project" value="UniProtKB-SubCell"/>
</dbReference>
<dbReference type="GO" id="GO:0004190">
    <property type="term" value="F:aspartic-type endopeptidase activity"/>
    <property type="evidence" value="ECO:0007669"/>
    <property type="project" value="UniProtKB-KW"/>
</dbReference>
<dbReference type="GO" id="GO:0003677">
    <property type="term" value="F:DNA binding"/>
    <property type="evidence" value="ECO:0007669"/>
    <property type="project" value="UniProtKB-KW"/>
</dbReference>
<dbReference type="GO" id="GO:0003887">
    <property type="term" value="F:DNA-directed DNA polymerase activity"/>
    <property type="evidence" value="ECO:0007669"/>
    <property type="project" value="UniProtKB-KW"/>
</dbReference>
<dbReference type="GO" id="GO:0004533">
    <property type="term" value="F:exoribonuclease H activity"/>
    <property type="evidence" value="ECO:0007669"/>
    <property type="project" value="UniProtKB-EC"/>
</dbReference>
<dbReference type="GO" id="GO:0008289">
    <property type="term" value="F:lipid binding"/>
    <property type="evidence" value="ECO:0007669"/>
    <property type="project" value="UniProtKB-KW"/>
</dbReference>
<dbReference type="GO" id="GO:0035613">
    <property type="term" value="F:RNA stem-loop binding"/>
    <property type="evidence" value="ECO:0007669"/>
    <property type="project" value="TreeGrafter"/>
</dbReference>
<dbReference type="GO" id="GO:0003964">
    <property type="term" value="F:RNA-directed DNA polymerase activity"/>
    <property type="evidence" value="ECO:0007669"/>
    <property type="project" value="UniProtKB-KW"/>
</dbReference>
<dbReference type="GO" id="GO:0004523">
    <property type="term" value="F:RNA-DNA hybrid ribonuclease activity"/>
    <property type="evidence" value="ECO:0007669"/>
    <property type="project" value="InterPro"/>
</dbReference>
<dbReference type="GO" id="GO:0005198">
    <property type="term" value="F:structural molecule activity"/>
    <property type="evidence" value="ECO:0007669"/>
    <property type="project" value="InterPro"/>
</dbReference>
<dbReference type="GO" id="GO:0008270">
    <property type="term" value="F:zinc ion binding"/>
    <property type="evidence" value="ECO:0007669"/>
    <property type="project" value="UniProtKB-KW"/>
</dbReference>
<dbReference type="GO" id="GO:0015074">
    <property type="term" value="P:DNA integration"/>
    <property type="evidence" value="ECO:0007669"/>
    <property type="project" value="UniProtKB-KW"/>
</dbReference>
<dbReference type="GO" id="GO:0006310">
    <property type="term" value="P:DNA recombination"/>
    <property type="evidence" value="ECO:0007669"/>
    <property type="project" value="UniProtKB-KW"/>
</dbReference>
<dbReference type="GO" id="GO:0075713">
    <property type="term" value="P:establishment of integrated proviral latency"/>
    <property type="evidence" value="ECO:0007669"/>
    <property type="project" value="UniProtKB-KW"/>
</dbReference>
<dbReference type="GO" id="GO:0006508">
    <property type="term" value="P:proteolysis"/>
    <property type="evidence" value="ECO:0007669"/>
    <property type="project" value="UniProtKB-KW"/>
</dbReference>
<dbReference type="GO" id="GO:0046718">
    <property type="term" value="P:symbiont entry into host cell"/>
    <property type="evidence" value="ECO:0007669"/>
    <property type="project" value="UniProtKB-KW"/>
</dbReference>
<dbReference type="GO" id="GO:0052151">
    <property type="term" value="P:symbiont-mediated activation of host apoptosis"/>
    <property type="evidence" value="ECO:0007669"/>
    <property type="project" value="UniProtKB-KW"/>
</dbReference>
<dbReference type="GO" id="GO:0039657">
    <property type="term" value="P:symbiont-mediated suppression of host gene expression"/>
    <property type="evidence" value="ECO:0007669"/>
    <property type="project" value="UniProtKB-KW"/>
</dbReference>
<dbReference type="GO" id="GO:0044826">
    <property type="term" value="P:viral genome integration into host DNA"/>
    <property type="evidence" value="ECO:0007669"/>
    <property type="project" value="UniProtKB-KW"/>
</dbReference>
<dbReference type="GO" id="GO:0075732">
    <property type="term" value="P:viral penetration into host nucleus"/>
    <property type="evidence" value="ECO:0007669"/>
    <property type="project" value="UniProtKB-KW"/>
</dbReference>
<dbReference type="GO" id="GO:0075523">
    <property type="term" value="P:viral translational frameshifting"/>
    <property type="evidence" value="ECO:0007669"/>
    <property type="project" value="UniProtKB-KW"/>
</dbReference>
<dbReference type="CDD" id="cd05482">
    <property type="entry name" value="HIV_retropepsin_like"/>
    <property type="match status" value="1"/>
</dbReference>
<dbReference type="CDD" id="cd01645">
    <property type="entry name" value="RT_Rtv"/>
    <property type="match status" value="1"/>
</dbReference>
<dbReference type="FunFam" id="1.10.375.10:FF:000001">
    <property type="entry name" value="Gag polyprotein"/>
    <property type="match status" value="1"/>
</dbReference>
<dbReference type="FunFam" id="3.30.70.270:FF:000006">
    <property type="entry name" value="Gag-Pol polyprotein"/>
    <property type="match status" value="1"/>
</dbReference>
<dbReference type="FunFam" id="3.30.420.10:FF:000017">
    <property type="entry name" value="POL polyprotein"/>
    <property type="match status" value="1"/>
</dbReference>
<dbReference type="Gene3D" id="1.10.10.200">
    <property type="match status" value="1"/>
</dbReference>
<dbReference type="Gene3D" id="1.10.1200.30">
    <property type="match status" value="1"/>
</dbReference>
<dbReference type="Gene3D" id="3.30.70.270">
    <property type="match status" value="3"/>
</dbReference>
<dbReference type="Gene3D" id="2.40.70.10">
    <property type="entry name" value="Acid Proteases"/>
    <property type="match status" value="1"/>
</dbReference>
<dbReference type="Gene3D" id="3.10.10.10">
    <property type="entry name" value="HIV Type 1 Reverse Transcriptase, subunit A, domain 1"/>
    <property type="match status" value="1"/>
</dbReference>
<dbReference type="Gene3D" id="1.10.375.10">
    <property type="entry name" value="Human Immunodeficiency Virus Type 1 Capsid Protein"/>
    <property type="match status" value="1"/>
</dbReference>
<dbReference type="Gene3D" id="1.10.150.90">
    <property type="entry name" value="Immunodeficiency lentiviruses, gag gene matrix protein p17"/>
    <property type="match status" value="1"/>
</dbReference>
<dbReference type="Gene3D" id="2.30.30.10">
    <property type="entry name" value="Integrase, C-terminal domain superfamily, retroviral"/>
    <property type="match status" value="1"/>
</dbReference>
<dbReference type="Gene3D" id="3.30.420.10">
    <property type="entry name" value="Ribonuclease H-like superfamily/Ribonuclease H"/>
    <property type="match status" value="2"/>
</dbReference>
<dbReference type="Gene3D" id="1.20.5.760">
    <property type="entry name" value="Single helix bin"/>
    <property type="match status" value="1"/>
</dbReference>
<dbReference type="Gene3D" id="4.10.60.10">
    <property type="entry name" value="Zinc finger, CCHC-type"/>
    <property type="match status" value="1"/>
</dbReference>
<dbReference type="InterPro" id="IPR001969">
    <property type="entry name" value="Aspartic_peptidase_AS"/>
</dbReference>
<dbReference type="InterPro" id="IPR043502">
    <property type="entry name" value="DNA/RNA_pol_sf"/>
</dbReference>
<dbReference type="InterPro" id="IPR045345">
    <property type="entry name" value="Gag_p24_C"/>
</dbReference>
<dbReference type="InterPro" id="IPR017856">
    <property type="entry name" value="Integrase-like_N"/>
</dbReference>
<dbReference type="InterPro" id="IPR036862">
    <property type="entry name" value="Integrase_C_dom_sf_retrovir"/>
</dbReference>
<dbReference type="InterPro" id="IPR001037">
    <property type="entry name" value="Integrase_C_retrovir"/>
</dbReference>
<dbReference type="InterPro" id="IPR001584">
    <property type="entry name" value="Integrase_cat-core"/>
</dbReference>
<dbReference type="InterPro" id="IPR003308">
    <property type="entry name" value="Integrase_Zn-bd_dom_N"/>
</dbReference>
<dbReference type="InterPro" id="IPR000071">
    <property type="entry name" value="Lentvrl_matrix_N"/>
</dbReference>
<dbReference type="InterPro" id="IPR012344">
    <property type="entry name" value="Matrix_HIV/RSV_N"/>
</dbReference>
<dbReference type="InterPro" id="IPR001995">
    <property type="entry name" value="Peptidase_A2_cat"/>
</dbReference>
<dbReference type="InterPro" id="IPR021109">
    <property type="entry name" value="Peptidase_aspartic_dom_sf"/>
</dbReference>
<dbReference type="InterPro" id="IPR034170">
    <property type="entry name" value="Retropepsin-like_cat_dom"/>
</dbReference>
<dbReference type="InterPro" id="IPR018061">
    <property type="entry name" value="Retropepsins"/>
</dbReference>
<dbReference type="InterPro" id="IPR008916">
    <property type="entry name" value="Retrov_capsid_C"/>
</dbReference>
<dbReference type="InterPro" id="IPR008919">
    <property type="entry name" value="Retrov_capsid_N"/>
</dbReference>
<dbReference type="InterPro" id="IPR010999">
    <property type="entry name" value="Retrovr_matrix"/>
</dbReference>
<dbReference type="InterPro" id="IPR043128">
    <property type="entry name" value="Rev_trsase/Diguanyl_cyclase"/>
</dbReference>
<dbReference type="InterPro" id="IPR012337">
    <property type="entry name" value="RNaseH-like_sf"/>
</dbReference>
<dbReference type="InterPro" id="IPR002156">
    <property type="entry name" value="RNaseH_domain"/>
</dbReference>
<dbReference type="InterPro" id="IPR036397">
    <property type="entry name" value="RNaseH_sf"/>
</dbReference>
<dbReference type="InterPro" id="IPR000477">
    <property type="entry name" value="RT_dom"/>
</dbReference>
<dbReference type="InterPro" id="IPR010659">
    <property type="entry name" value="RVT_connect"/>
</dbReference>
<dbReference type="InterPro" id="IPR010661">
    <property type="entry name" value="RVT_thumb"/>
</dbReference>
<dbReference type="InterPro" id="IPR001878">
    <property type="entry name" value="Znf_CCHC"/>
</dbReference>
<dbReference type="InterPro" id="IPR036875">
    <property type="entry name" value="Znf_CCHC_sf"/>
</dbReference>
<dbReference type="PANTHER" id="PTHR41694">
    <property type="entry name" value="ENDOGENOUS RETROVIRUS GROUP K MEMBER POL PROTEIN"/>
    <property type="match status" value="1"/>
</dbReference>
<dbReference type="PANTHER" id="PTHR41694:SF3">
    <property type="entry name" value="RNA-DIRECTED DNA POLYMERASE-RELATED"/>
    <property type="match status" value="1"/>
</dbReference>
<dbReference type="Pfam" id="PF00540">
    <property type="entry name" value="Gag_p17"/>
    <property type="match status" value="1"/>
</dbReference>
<dbReference type="Pfam" id="PF19317">
    <property type="entry name" value="Gag_p24_C"/>
    <property type="match status" value="1"/>
</dbReference>
<dbReference type="Pfam" id="PF00552">
    <property type="entry name" value="IN_DBD_C"/>
    <property type="match status" value="1"/>
</dbReference>
<dbReference type="Pfam" id="PF02022">
    <property type="entry name" value="Integrase_Zn"/>
    <property type="match status" value="1"/>
</dbReference>
<dbReference type="Pfam" id="PF00075">
    <property type="entry name" value="RNase_H"/>
    <property type="match status" value="1"/>
</dbReference>
<dbReference type="Pfam" id="PF00665">
    <property type="entry name" value="rve"/>
    <property type="match status" value="1"/>
</dbReference>
<dbReference type="Pfam" id="PF00077">
    <property type="entry name" value="RVP"/>
    <property type="match status" value="1"/>
</dbReference>
<dbReference type="Pfam" id="PF00078">
    <property type="entry name" value="RVT_1"/>
    <property type="match status" value="1"/>
</dbReference>
<dbReference type="Pfam" id="PF06815">
    <property type="entry name" value="RVT_connect"/>
    <property type="match status" value="1"/>
</dbReference>
<dbReference type="Pfam" id="PF06817">
    <property type="entry name" value="RVT_thumb"/>
    <property type="match status" value="1"/>
</dbReference>
<dbReference type="Pfam" id="PF00098">
    <property type="entry name" value="zf-CCHC"/>
    <property type="match status" value="2"/>
</dbReference>
<dbReference type="PRINTS" id="PR00234">
    <property type="entry name" value="HIV1MATRIX"/>
</dbReference>
<dbReference type="SMART" id="SM00343">
    <property type="entry name" value="ZnF_C2HC"/>
    <property type="match status" value="2"/>
</dbReference>
<dbReference type="SUPFAM" id="SSF50630">
    <property type="entry name" value="Acid proteases"/>
    <property type="match status" value="1"/>
</dbReference>
<dbReference type="SUPFAM" id="SSF50122">
    <property type="entry name" value="DNA-binding domain of retroviral integrase"/>
    <property type="match status" value="1"/>
</dbReference>
<dbReference type="SUPFAM" id="SSF56672">
    <property type="entry name" value="DNA/RNA polymerases"/>
    <property type="match status" value="1"/>
</dbReference>
<dbReference type="SUPFAM" id="SSF46919">
    <property type="entry name" value="N-terminal Zn binding domain of HIV integrase"/>
    <property type="match status" value="1"/>
</dbReference>
<dbReference type="SUPFAM" id="SSF47836">
    <property type="entry name" value="Retroviral matrix proteins"/>
    <property type="match status" value="1"/>
</dbReference>
<dbReference type="SUPFAM" id="SSF47353">
    <property type="entry name" value="Retrovirus capsid dimerization domain-like"/>
    <property type="match status" value="1"/>
</dbReference>
<dbReference type="SUPFAM" id="SSF47943">
    <property type="entry name" value="Retrovirus capsid protein, N-terminal core domain"/>
    <property type="match status" value="1"/>
</dbReference>
<dbReference type="SUPFAM" id="SSF57756">
    <property type="entry name" value="Retrovirus zinc finger-like domains"/>
    <property type="match status" value="1"/>
</dbReference>
<dbReference type="SUPFAM" id="SSF53098">
    <property type="entry name" value="Ribonuclease H-like"/>
    <property type="match status" value="2"/>
</dbReference>
<dbReference type="PROSITE" id="PS50175">
    <property type="entry name" value="ASP_PROT_RETROV"/>
    <property type="match status" value="1"/>
</dbReference>
<dbReference type="PROSITE" id="PS00141">
    <property type="entry name" value="ASP_PROTEASE"/>
    <property type="match status" value="1"/>
</dbReference>
<dbReference type="PROSITE" id="PS50994">
    <property type="entry name" value="INTEGRASE"/>
    <property type="match status" value="1"/>
</dbReference>
<dbReference type="PROSITE" id="PS51027">
    <property type="entry name" value="INTEGRASE_DBD"/>
    <property type="match status" value="1"/>
</dbReference>
<dbReference type="PROSITE" id="PS50879">
    <property type="entry name" value="RNASE_H_1"/>
    <property type="match status" value="1"/>
</dbReference>
<dbReference type="PROSITE" id="PS50878">
    <property type="entry name" value="RT_POL"/>
    <property type="match status" value="1"/>
</dbReference>
<dbReference type="PROSITE" id="PS50158">
    <property type="entry name" value="ZF_CCHC"/>
    <property type="match status" value="2"/>
</dbReference>
<dbReference type="PROSITE" id="PS50876">
    <property type="entry name" value="ZF_INTEGRASE"/>
    <property type="match status" value="1"/>
</dbReference>
<keyword id="KW-1073">Activation of host caspases by virus</keyword>
<keyword id="KW-0014">AIDS</keyword>
<keyword id="KW-0064">Aspartyl protease</keyword>
<keyword id="KW-0167">Capsid protein</keyword>
<keyword id="KW-0229">DNA integration</keyword>
<keyword id="KW-0233">DNA recombination</keyword>
<keyword id="KW-0238">DNA-binding</keyword>
<keyword id="KW-0239">DNA-directed DNA polymerase</keyword>
<keyword id="KW-0255">Endonuclease</keyword>
<keyword id="KW-1262">Eukaryotic host gene expression shutoff by virus</keyword>
<keyword id="KW-1193">Eukaryotic host translation shutoff by virus</keyword>
<keyword id="KW-1032">Host cell membrane</keyword>
<keyword id="KW-1035">Host cytoplasm</keyword>
<keyword id="KW-1039">Host endosome</keyword>
<keyword id="KW-1190">Host gene expression shutoff by virus</keyword>
<keyword id="KW-1043">Host membrane</keyword>
<keyword id="KW-1048">Host nucleus</keyword>
<keyword id="KW-0945">Host-virus interaction</keyword>
<keyword id="KW-0378">Hydrolase</keyword>
<keyword id="KW-0446">Lipid-binding</keyword>
<keyword id="KW-0449">Lipoprotein</keyword>
<keyword id="KW-0460">Magnesium</keyword>
<keyword id="KW-0472">Membrane</keyword>
<keyword id="KW-0479">Metal-binding</keyword>
<keyword id="KW-1119">Modulation of host cell apoptosis by virus</keyword>
<keyword id="KW-0511">Multifunctional enzyme</keyword>
<keyword id="KW-0519">Myristate</keyword>
<keyword id="KW-0540">Nuclease</keyword>
<keyword id="KW-0548">Nucleotidyltransferase</keyword>
<keyword id="KW-0597">Phosphoprotein</keyword>
<keyword id="KW-0645">Protease</keyword>
<keyword id="KW-0677">Repeat</keyword>
<keyword id="KW-0688">Ribosomal frameshifting</keyword>
<keyword id="KW-0694">RNA-binding</keyword>
<keyword id="KW-0695">RNA-directed DNA polymerase</keyword>
<keyword id="KW-0808">Transferase</keyword>
<keyword id="KW-1179">Viral genome integration</keyword>
<keyword id="KW-0543">Viral nucleoprotein</keyword>
<keyword id="KW-1163">Viral penetration into host nucleus</keyword>
<keyword id="KW-1188">Viral release from host cell</keyword>
<keyword id="KW-0946">Virion</keyword>
<keyword id="KW-0917">Virion maturation</keyword>
<keyword id="KW-1160">Virus entry into host cell</keyword>
<keyword id="KW-0862">Zinc</keyword>
<keyword id="KW-0863">Zinc-finger</keyword>
<feature type="initiator methionine" description="Removed; by host" evidence="1">
    <location>
        <position position="1"/>
    </location>
</feature>
<feature type="chain" id="PRO_0000261284" description="Gag-Pol polyprotein">
    <location>
        <begin position="2"/>
        <end position="1436"/>
    </location>
</feature>
<feature type="chain" id="PRO_0000246576" description="Matrix protein p17" evidence="1">
    <location>
        <begin position="2"/>
        <end position="134"/>
    </location>
</feature>
<feature type="chain" id="PRO_0000246577" description="Capsid protein p24" evidence="1">
    <location>
        <begin position="135"/>
        <end position="365"/>
    </location>
</feature>
<feature type="peptide" id="PRO_0000246578" description="Spacer peptide 1" evidence="1">
    <location>
        <begin position="366"/>
        <end position="380"/>
    </location>
</feature>
<feature type="chain" id="PRO_0000246579" description="Nucleocapsid protein p7" evidence="1">
    <location>
        <begin position="381"/>
        <end position="435"/>
    </location>
</feature>
<feature type="peptide" id="PRO_0000246734" description="Transframe peptide" evidence="8">
    <location>
        <begin position="436"/>
        <end position="443"/>
    </location>
</feature>
<feature type="chain" id="PRO_0000246580" description="p6-pol" evidence="8">
    <location>
        <begin position="444"/>
        <end position="489"/>
    </location>
</feature>
<feature type="chain" id="PRO_0000246581" description="Protease" evidence="1">
    <location>
        <begin position="490"/>
        <end position="588"/>
    </location>
</feature>
<feature type="chain" id="PRO_0000246582" description="Reverse transcriptase/ribonuclease H" evidence="1">
    <location>
        <begin position="589"/>
        <end position="1148"/>
    </location>
</feature>
<feature type="chain" id="PRO_0000246583" description="p51 RT" evidence="1">
    <location>
        <begin position="589"/>
        <end position="1028"/>
    </location>
</feature>
<feature type="chain" id="PRO_0000246584" description="p15" evidence="1">
    <location>
        <begin position="1029"/>
        <end position="1148"/>
    </location>
</feature>
<feature type="chain" id="PRO_0000246585" description="Integrase" evidence="1">
    <location>
        <begin position="1149"/>
        <end position="1436"/>
    </location>
</feature>
<feature type="domain" description="Peptidase A2" evidence="10">
    <location>
        <begin position="509"/>
        <end position="578"/>
    </location>
</feature>
<feature type="domain" description="Reverse transcriptase" evidence="11">
    <location>
        <begin position="632"/>
        <end position="822"/>
    </location>
</feature>
<feature type="domain" description="RNase H type-1" evidence="12">
    <location>
        <begin position="1022"/>
        <end position="1145"/>
    </location>
</feature>
<feature type="domain" description="Integrase catalytic" evidence="14">
    <location>
        <begin position="1202"/>
        <end position="1352"/>
    </location>
</feature>
<feature type="zinc finger region" description="CCHC-type 1" evidence="9">
    <location>
        <begin position="393"/>
        <end position="410"/>
    </location>
</feature>
<feature type="zinc finger region" description="CCHC-type 2" evidence="9">
    <location>
        <begin position="414"/>
        <end position="431"/>
    </location>
</feature>
<feature type="zinc finger region" description="Integrase-type" evidence="13">
    <location>
        <begin position="1151"/>
        <end position="1192"/>
    </location>
</feature>
<feature type="DNA-binding region" description="Integrase-type" evidence="15">
    <location>
        <begin position="1371"/>
        <end position="1418"/>
    </location>
</feature>
<feature type="region of interest" description="Interaction with Gp41" evidence="7">
    <location>
        <begin position="7"/>
        <end position="31"/>
    </location>
</feature>
<feature type="region of interest" description="Interaction with host CALM1" evidence="5">
    <location>
        <begin position="8"/>
        <end position="43"/>
    </location>
</feature>
<feature type="region of interest" description="Interaction with host AP3D1" evidence="7">
    <location>
        <begin position="12"/>
        <end position="19"/>
    </location>
</feature>
<feature type="region of interest" description="Interaction with membrane phosphatidylinositol 4,5-bisphosphate and RNA" evidence="7">
    <location>
        <begin position="14"/>
        <end position="33"/>
    </location>
</feature>
<feature type="region of interest" description="Interaction with membrane phosphatidylinositol 4,5-bisphosphate" evidence="7">
    <location>
        <begin position="73"/>
        <end position="77"/>
    </location>
</feature>
<feature type="region of interest" description="Disordered" evidence="17">
    <location>
        <begin position="110"/>
        <end position="129"/>
    </location>
</feature>
<feature type="region of interest" description="Interaction with human PPIA/CYPA and NUP153" evidence="7">
    <location>
        <begin position="191"/>
        <end position="229"/>
    </location>
</feature>
<feature type="region of interest" description="Dimerization/Multimerization of capsid protein p24" evidence="5">
    <location>
        <begin position="279"/>
        <end position="365"/>
    </location>
</feature>
<feature type="region of interest" description="Disordered" evidence="17">
    <location>
        <begin position="447"/>
        <end position="482"/>
    </location>
</feature>
<feature type="region of interest" description="Dimerization of protease" evidence="5">
    <location>
        <begin position="490"/>
        <end position="494"/>
    </location>
</feature>
<feature type="region of interest" description="Dimerization of protease" evidence="5">
    <location>
        <begin position="538"/>
        <end position="544"/>
    </location>
</feature>
<feature type="region of interest" description="Dimerization of protease" evidence="5">
    <location>
        <begin position="577"/>
        <end position="589"/>
    </location>
</feature>
<feature type="region of interest" description="RT 'primer grip'" evidence="1">
    <location>
        <begin position="815"/>
        <end position="823"/>
    </location>
</feature>
<feature type="short sequence motif" description="Nuclear export signal" evidence="1">
    <location>
        <begin position="16"/>
        <end position="22"/>
    </location>
</feature>
<feature type="short sequence motif" description="Nuclear localization signal" evidence="1">
    <location>
        <begin position="26"/>
        <end position="32"/>
    </location>
</feature>
<feature type="short sequence motif" description="Tryptophan repeat motif" evidence="1">
    <location>
        <begin position="986"/>
        <end position="1002"/>
    </location>
</feature>
<feature type="compositionally biased region" description="Basic and acidic residues" evidence="17">
    <location>
        <begin position="447"/>
        <end position="457"/>
    </location>
</feature>
<feature type="compositionally biased region" description="Basic and acidic residues" evidence="17">
    <location>
        <begin position="464"/>
        <end position="475"/>
    </location>
</feature>
<feature type="active site" description="For protease activity; shared with dimeric partner" evidence="16">
    <location>
        <position position="514"/>
    </location>
</feature>
<feature type="binding site" evidence="1">
    <location>
        <position position="698"/>
    </location>
    <ligand>
        <name>Mg(2+)</name>
        <dbReference type="ChEBI" id="CHEBI:18420"/>
        <label>1</label>
        <note>catalytic; for reverse transcriptase activity</note>
    </ligand>
</feature>
<feature type="binding site" evidence="1">
    <location>
        <position position="773"/>
    </location>
    <ligand>
        <name>Mg(2+)</name>
        <dbReference type="ChEBI" id="CHEBI:18420"/>
        <label>1</label>
        <note>catalytic; for reverse transcriptase activity</note>
    </ligand>
</feature>
<feature type="binding site" evidence="1">
    <location>
        <position position="774"/>
    </location>
    <ligand>
        <name>Mg(2+)</name>
        <dbReference type="ChEBI" id="CHEBI:18420"/>
        <label>1</label>
        <note>catalytic; for reverse transcriptase activity</note>
    </ligand>
</feature>
<feature type="binding site" evidence="1">
    <location>
        <position position="1031"/>
    </location>
    <ligand>
        <name>Mg(2+)</name>
        <dbReference type="ChEBI" id="CHEBI:18420"/>
        <label>2</label>
        <note>catalytic; for RNase H activity</note>
    </ligand>
</feature>
<feature type="binding site" evidence="1">
    <location>
        <position position="1066"/>
    </location>
    <ligand>
        <name>Mg(2+)</name>
        <dbReference type="ChEBI" id="CHEBI:18420"/>
        <label>2</label>
        <note>catalytic; for RNase H activity</note>
    </ligand>
</feature>
<feature type="binding site" evidence="1">
    <location>
        <position position="1086"/>
    </location>
    <ligand>
        <name>Mg(2+)</name>
        <dbReference type="ChEBI" id="CHEBI:18420"/>
        <label>2</label>
        <note>catalytic; for RNase H activity</note>
    </ligand>
</feature>
<feature type="binding site" evidence="1">
    <location>
        <position position="1137"/>
    </location>
    <ligand>
        <name>Mg(2+)</name>
        <dbReference type="ChEBI" id="CHEBI:18420"/>
        <label>2</label>
        <note>catalytic; for RNase H activity</note>
    </ligand>
</feature>
<feature type="binding site" evidence="13">
    <location>
        <position position="1160"/>
    </location>
    <ligand>
        <name>Zn(2+)</name>
        <dbReference type="ChEBI" id="CHEBI:29105"/>
    </ligand>
</feature>
<feature type="binding site" evidence="13">
    <location>
        <position position="1164"/>
    </location>
    <ligand>
        <name>Zn(2+)</name>
        <dbReference type="ChEBI" id="CHEBI:29105"/>
    </ligand>
</feature>
<feature type="binding site" evidence="13">
    <location>
        <position position="1188"/>
    </location>
    <ligand>
        <name>Zn(2+)</name>
        <dbReference type="ChEBI" id="CHEBI:29105"/>
    </ligand>
</feature>
<feature type="binding site" evidence="13">
    <location>
        <position position="1191"/>
    </location>
    <ligand>
        <name>Zn(2+)</name>
        <dbReference type="ChEBI" id="CHEBI:29105"/>
    </ligand>
</feature>
<feature type="binding site" evidence="1">
    <location>
        <position position="1212"/>
    </location>
    <ligand>
        <name>Mg(2+)</name>
        <dbReference type="ChEBI" id="CHEBI:18420"/>
        <label>3</label>
        <note>catalytic; for integrase activity</note>
    </ligand>
</feature>
<feature type="binding site" evidence="1">
    <location>
        <position position="1264"/>
    </location>
    <ligand>
        <name>Mg(2+)</name>
        <dbReference type="ChEBI" id="CHEBI:18420"/>
        <label>3</label>
        <note>catalytic; for integrase activity</note>
    </ligand>
</feature>
<feature type="binding site" evidence="5">
    <location>
        <position position="1300"/>
    </location>
    <ligand>
        <name>Mg(2+)</name>
        <dbReference type="ChEBI" id="CHEBI:18420"/>
        <label>3</label>
        <note>catalytic; for integrase activity</note>
    </ligand>
</feature>
<feature type="site" description="Cleavage; by viral protease" evidence="1">
    <location>
        <begin position="134"/>
        <end position="135"/>
    </location>
</feature>
<feature type="site" description="Cis/trans isomerization of proline peptide bond; by human PPIA/CYPA" evidence="1">
    <location>
        <begin position="223"/>
        <end position="224"/>
    </location>
</feature>
<feature type="site" description="Cleavage; by viral protease" evidence="1">
    <location>
        <begin position="365"/>
        <end position="366"/>
    </location>
</feature>
<feature type="site" description="Cleavage; by viral protease" evidence="1">
    <location>
        <begin position="380"/>
        <end position="381"/>
    </location>
</feature>
<feature type="site" description="Cleavage; by viral protease" evidence="8">
    <location>
        <begin position="435"/>
        <end position="436"/>
    </location>
</feature>
<feature type="site" description="Cleavage; by viral protease" evidence="1">
    <location>
        <begin position="443"/>
        <end position="444"/>
    </location>
</feature>
<feature type="site" description="Cleavage; by viral protease" evidence="1">
    <location>
        <begin position="489"/>
        <end position="490"/>
    </location>
</feature>
<feature type="site" description="Cleavage; by viral protease" evidence="1">
    <location>
        <begin position="587" status="uncertain"/>
        <end position="588" status="uncertain"/>
    </location>
</feature>
<feature type="site" description="Essential for RT p66/p51 heterodimerization" evidence="1">
    <location>
        <position position="988"/>
    </location>
</feature>
<feature type="site" description="Essential for RT p66/p51 heterodimerization" evidence="1">
    <location>
        <begin position="1001"/>
        <end position="1002"/>
    </location>
</feature>
<feature type="site" description="Cleavage; by viral protease; partial" evidence="8">
    <location>
        <begin position="1027" status="uncertain"/>
        <end position="1028" status="uncertain"/>
    </location>
</feature>
<feature type="site" description="Cleavage; by viral protease" evidence="1">
    <location>
        <begin position="1148"/>
        <end position="1149"/>
    </location>
</feature>
<feature type="modified residue" description="Phosphotyrosine; by host" evidence="1">
    <location>
        <position position="134"/>
    </location>
</feature>
<feature type="lipid moiety-binding region" description="N-myristoyl glycine; by host" evidence="1">
    <location>
        <position position="2"/>
    </location>
</feature>
<gene>
    <name type="primary">gag-pol</name>
</gene>
<accession>Q9Q720</accession>
<comment type="function">
    <molecule>Gag-Pol polyprotein</molecule>
    <text evidence="1">Mediates, with Gag polyprotein, the essential events in virion assembly, including binding the plasma membrane, making the protein-protein interactions necessary to create spherical particles, recruiting the viral Env proteins, and packaging the genomic RNA via direct interactions with the RNA packaging sequence (Psi). Gag-Pol polyprotein may regulate its own translation, by the binding genomic RNA in the 5'-UTR. At low concentration, the polyprotein would promote translation, whereas at high concentration, the polyprotein would encapsidate genomic RNA and then shut off translation.</text>
</comment>
<comment type="function">
    <molecule>Matrix protein p17</molecule>
    <text evidence="7">Targets the polyprotein to the plasma membrane via a multipartite membrane-binding signal, that includes its myristoylated N-terminus. Matrix protein is part of the pre-integration complex. Implicated in the release from host cell mediated by Vpu. Binds to RNA.</text>
</comment>
<comment type="function">
    <molecule>Capsid protein p24</molecule>
    <text evidence="5 7">Forms the conical core that encapsulates the genomic RNA-nucleocapsid complex in the virion. Most core are conical, with only 7% tubular. The core is constituted by capsid protein hexamer subunits. The core is disassembled soon after virion entry (By similarity). Host restriction factors such as TRIM5-alpha or TRIMCyp bind retroviral capsids and cause premature capsid disassembly, leading to blocks in reverse transcription. Capsid restriction by TRIM5 is one of the factors which restricts HIV-1 to the human species. Host PIN1 apparently facilitates the virion uncoating. On the other hand, interactions with PDZD8 or CYPA stabilize the capsid.</text>
</comment>
<comment type="function">
    <molecule>Nucleocapsid protein p7</molecule>
    <text evidence="5">Encapsulates and protects viral dimeric unspliced genomic RNA (gRNA). Binds these RNAs through its zinc fingers. Acts as a nucleic acid chaperone which is involved in rearangement of nucleic acid secondary structure during gRNA retrotranscription. Also facilitates template switch leading to recombination. As part of the polyprotein, participates in gRNA dimerization, packaging, tRNA incorporation and virion assembly.</text>
</comment>
<comment type="function">
    <molecule>Protease</molecule>
    <text evidence="5 10">Aspartyl protease that mediates proteolytic cleavages of Gag and Gag-Pol polyproteins during or shortly after the release of the virion from the plasma membrane. Cleavages take place as an ordered, step-wise cascade to yield mature proteins. This process is called maturation. Displays maximal activity during the budding process just prior to particle release from the cell. Also cleaves Nef and Vif, probably concomitantly with viral structural proteins on maturation of virus particles. Hydrolyzes host EIF4GI and PABP1 in order to shut off the capped cellular mRNA translation. The resulting inhibition of cellular protein synthesis serves to ensure maximal viral gene expression and to evade host immune response. Also mediates cleavage of host YTHDF3. Mediates cleavage of host CARD8, thereby activating the CARD8 inflammasome, leading to the clearance of latent HIV-1 in patient CD4(+) T-cells after viral reactivation; in contrast, HIV-1 can evade CARD8-sensing when its protease remains inactive in infected cells prior to viral budding (By similarity).</text>
</comment>
<comment type="function">
    <molecule>Reverse transcriptase/ribonuclease H</molecule>
    <text evidence="5">Multifunctional enzyme that converts the viral RNA genome into dsDNA in the cytoplasm, shortly after virus entry into the cell. This enzyme displays a DNA polymerase activity that can copy either DNA or RNA templates, and a ribonuclease H (RNase H) activity that cleaves the RNA strand of RNA-DNA heteroduplexes in a partially processive 3' to 5' endonucleasic mode. Conversion of viral genomic RNA into dsDNA requires many steps. A tRNA(3)-Lys binds to the primer-binding site (PBS) situated at the 5'-end of the viral RNA. RT uses the 3' end of the tRNA primer to perform a short round of RNA-dependent minus-strand DNA synthesis. The reading proceeds through the U5 region and ends after the repeated (R) region which is present at both ends of viral RNA. The portion of the RNA-DNA heteroduplex is digested by the RNase H, resulting in a ssDNA product attached to the tRNA primer. This ssDNA/tRNA hybridizes with the identical R region situated at the 3' end of viral RNA. This template exchange, known as minus-strand DNA strong stop transfer, can be either intra- or intermolecular. RT uses the 3' end of this newly synthesized short ssDNA to perform the RNA-dependent minus-strand DNA synthesis of the whole template. RNase H digests the RNA template except for two polypurine tracts (PPTs) situated at the 5'-end and near the center of the genome. It is not clear if both polymerase and RNase H activities are simultaneous. RNase H probably can proceed both in a polymerase-dependent (RNA cut into small fragments by the same RT performing DNA synthesis) and a polymerase-independent mode (cleavage of remaining RNA fragments by free RTs). Secondly, RT performs DNA-directed plus-strand DNA synthesis using the PPTs that have not been removed by RNase H as primers. PPTs and tRNA primers are then removed by RNase H. The 3' and 5' ssDNA PBS regions hybridize to form a circular dsDNA intermediate. Strand displacement synthesis by RT to the PBS and PPT ends produces a blunt ended, linear dsDNA copy of the viral genome that includes long terminal repeats (LTRs) at both ends.</text>
</comment>
<comment type="function">
    <molecule>Integrase</molecule>
    <text evidence="5">Catalyzes viral DNA integration into the host chromosome, by performing a series of DNA cutting and joining reactions. This enzyme activity takes place after virion entry into a cell and reverse transcription of the RNA genome in dsDNA. The first step in the integration process is 3' processing. This step requires a complex comprising the viral genome, matrix protein, Vpr and integrase. This complex is called the pre-integration complex (PIC). The integrase protein removes 2 nucleotides from each 3' end of the viral DNA, leaving recessed CA OH's at the 3' ends. In the second step, the PIC enters cell nucleus. This process is mediated through integrase and Vpr proteins, and allows the virus to infect a non dividing cell. This ability to enter the nucleus is specific of lentiviruses, other retroviruses cannot and rely on cell division to access cell chromosomes. In the third step, termed strand transfer, the integrase protein joins the previously processed 3' ends to the 5' ends of strands of target cellular DNA at the site of integration. The 5'-ends are produced by integrase-catalyzed staggered cuts, 5 bp apart. A Y-shaped, gapped, recombination intermediate results, with the 5'-ends of the viral DNA strands and the 3' ends of target DNA strands remaining unjoined, flanking a gap of 5 bp. The last step is viral DNA integration into host chromosome. This involves host DNA repair synthesis in which the 5 bp gaps between the unjoined strands are filled in and then ligated. Since this process occurs at both cuts flanking the HIV genome, a 5 bp duplication of host DNA is produced at the ends of HIV-1 integration. Alternatively, Integrase may catalyze the excision of viral DNA just after strand transfer, this is termed disintegration.</text>
</comment>
<comment type="catalytic activity">
    <reaction evidence="10">
        <text>Specific for a P1 residue that is hydrophobic, and P1' variable, but often Pro.</text>
        <dbReference type="EC" id="3.4.23.16"/>
    </reaction>
</comment>
<comment type="catalytic activity">
    <reaction evidence="1">
        <text>Endohydrolysis of RNA in RNA/DNA hybrids. Three different cleavage modes: 1. sequence-specific internal cleavage of RNA. Human immunodeficiency virus type 1 and Moloney murine leukemia virus enzymes prefer to cleave the RNA strand one nucleotide away from the RNA-DNA junction. 2. RNA 5'-end directed cleavage 13-19 nucleotides from the RNA end. 3. DNA 3'-end directed cleavage 15-20 nucleotides away from the primer terminus.</text>
        <dbReference type="EC" id="3.1.26.13"/>
    </reaction>
</comment>
<comment type="catalytic activity">
    <reaction evidence="1">
        <text>3'-end directed exonucleolytic cleavage of viral RNA-DNA hybrid.</text>
        <dbReference type="EC" id="3.1.13.2"/>
    </reaction>
</comment>
<comment type="catalytic activity">
    <reaction evidence="11">
        <text>DNA(n) + a 2'-deoxyribonucleoside 5'-triphosphate = DNA(n+1) + diphosphate</text>
        <dbReference type="Rhea" id="RHEA:22508"/>
        <dbReference type="Rhea" id="RHEA-COMP:17339"/>
        <dbReference type="Rhea" id="RHEA-COMP:17340"/>
        <dbReference type="ChEBI" id="CHEBI:33019"/>
        <dbReference type="ChEBI" id="CHEBI:61560"/>
        <dbReference type="ChEBI" id="CHEBI:173112"/>
        <dbReference type="EC" id="2.7.7.49"/>
    </reaction>
</comment>
<comment type="catalytic activity">
    <reaction evidence="11">
        <text>DNA(n) + a 2'-deoxyribonucleoside 5'-triphosphate = DNA(n+1) + diphosphate</text>
        <dbReference type="Rhea" id="RHEA:22508"/>
        <dbReference type="Rhea" id="RHEA-COMP:17339"/>
        <dbReference type="Rhea" id="RHEA-COMP:17340"/>
        <dbReference type="ChEBI" id="CHEBI:33019"/>
        <dbReference type="ChEBI" id="CHEBI:61560"/>
        <dbReference type="ChEBI" id="CHEBI:173112"/>
        <dbReference type="EC" id="2.7.7.7"/>
    </reaction>
</comment>
<comment type="cofactor">
    <cofactor evidence="1">
        <name>Mg(2+)</name>
        <dbReference type="ChEBI" id="CHEBI:18420"/>
    </cofactor>
    <text evidence="1">Binds 2 magnesium ions for reverse transcriptase polymerase activity.</text>
</comment>
<comment type="cofactor">
    <cofactor evidence="1">
        <name>Mg(2+)</name>
        <dbReference type="ChEBI" id="CHEBI:18420"/>
    </cofactor>
    <text evidence="1">Binds 2 magnesium ions for ribonuclease H (RNase H) activity. Substrate-binding is a precondition for magnesium binding.</text>
</comment>
<comment type="cofactor">
    <cofactor evidence="1">
        <name>Mg(2+)</name>
        <dbReference type="ChEBI" id="CHEBI:18420"/>
    </cofactor>
    <text evidence="1">Magnesium ions are required for integrase activity. Binds at least 1, maybe 2 magnesium ions.</text>
</comment>
<comment type="activity regulation">
    <text evidence="1">Protease: The viral protease is inhibited by many synthetic protease inhibitors (PIs), such as amprenavir, atazanavir, indinavir, loprinavir, nelfinavir, ritonavir and saquinavir. Use of protease inhibitors in tritherapy regimens permit more ambitious therapeutic strategies. Reverse transcriptase/ribonuclease H: RT can be inhibited either by nucleoside RT inhibitors (NRTIs) or by non nucleoside RT inhibitors (NNRTIs). NRTIs act as chain terminators, whereas NNRTIs inhibit DNA polymerization by binding a small hydrophobic pocket near the RT active site and inducing an allosteric change in this region. Classical NRTIs are abacavir, adefovir (PMEA), didanosine (ddI), lamivudine (3TC), stavudine (d4T), tenofovir (PMPA), zalcitabine (ddC), and zidovudine (AZT). Classical NNRTIs are atevirdine (BHAP U-87201E), delavirdine, efavirenz (DMP-266), emivirine (I-EBU), and nevirapine (BI-RG-587). The tritherapies used as a basic effective treatment of AIDS associate two NRTIs and one NNRTI.</text>
</comment>
<comment type="subunit">
    <molecule>Matrix protein p17</molecule>
    <text evidence="5 7">Homotrimer; further assembles as hexamers of trimers (By similarity). Interacts with gp41 (via C-terminus) (By similarity). Interacts with host CALM1; this interaction induces a conformational change in the Matrix protein, triggering exposure of the myristate group (By similarity). Interacts with host AP3D1; this interaction allows the polyprotein trafficking to multivesicular bodies during virus assembly (By similarity). Part of the pre-integration complex (PIC) which is composed of viral genome, matrix protein, Vpr and integrase (By similarity).</text>
</comment>
<comment type="subunit">
    <molecule>Capsid protein p24</molecule>
    <text evidence="5 7">Homodimer; the homodimer further multimerizes as homohexamers or homopentamers. Interacts with human PPIA/CYPA (By similarity); This interaction stabilizes the capsid. Interacts with human NUP153 (By similarity). Interacts with host PDZD8; this interaction stabilizes the capsid (By similarity). Interacts with monkey TRIM5; this interaction destabilizes the capsid (By similarity).</text>
</comment>
<comment type="subunit">
    <molecule>Protease</molecule>
    <text evidence="5 7">Homodimer, whose active site consists of two apposed aspartic acid residues.</text>
</comment>
<comment type="subunit">
    <molecule>Reverse transcriptase/ribonuclease H</molecule>
    <text evidence="3">Heterodimer of p66 RT and p51 RT (RT p66/p51) (By similarity). Heterodimerization of RT is essential for DNA polymerase activity (By similarity). The overall folding of the subdomains is similar in p66 RT and p51 RT but the spatial arrangements of the subdomains are dramatically different (By similarity).</text>
</comment>
<comment type="subunit">
    <molecule>Integrase</molecule>
    <text evidence="4 5 7">Homotetramer; may further associate as a homohexadecamer (By similarity). Part of the pre-integration complex (PIC) which is composed of viral genome, matrix protein, Vpr and integrase. Interacts with human SMARCB1/INI1 and human PSIP1/LEDGF isoform 1. Interacts with human KPNA3; this interaction might play a role in nuclear import of the pre-integration complex (By similarity). Interacts with human NUP153; this interaction might play a role in nuclear import of the pre-integration complex (By similarity).</text>
</comment>
<comment type="subcellular location">
    <molecule>Gag-Pol polyprotein</molecule>
    <subcellularLocation>
        <location>Host cell membrane</location>
        <topology>Lipid-anchor</topology>
    </subcellularLocation>
    <subcellularLocation>
        <location>Host endosome</location>
        <location>Host multivesicular body</location>
    </subcellularLocation>
    <text evidence="7">These locations are linked to virus assembly sites. The main location is the cell membrane, but under some circumstances, late endosomal compartments can serve as productive sites for virion assembly.</text>
</comment>
<comment type="subcellular location">
    <molecule>Matrix protein p17</molecule>
    <subcellularLocation>
        <location>Virion membrane</location>
        <topology evidence="18">Lipid-anchor</topology>
    </subcellularLocation>
    <subcellularLocation>
        <location evidence="1">Host nucleus</location>
    </subcellularLocation>
    <subcellularLocation>
        <location evidence="1">Host cytoplasm</location>
    </subcellularLocation>
</comment>
<comment type="subcellular location">
    <molecule>Capsid protein p24</molecule>
    <subcellularLocation>
        <location evidence="18">Virion</location>
    </subcellularLocation>
</comment>
<comment type="subcellular location">
    <molecule>Nucleocapsid protein p7</molecule>
    <subcellularLocation>
        <location evidence="18">Virion</location>
    </subcellularLocation>
</comment>
<comment type="subcellular location">
    <molecule>Reverse transcriptase/ribonuclease H</molecule>
    <subcellularLocation>
        <location evidence="18">Virion</location>
    </subcellularLocation>
</comment>
<comment type="subcellular location">
    <molecule>Integrase</molecule>
    <subcellularLocation>
        <location evidence="18">Virion</location>
    </subcellularLocation>
    <subcellularLocation>
        <location evidence="18">Host nucleus</location>
    </subcellularLocation>
    <subcellularLocation>
        <location evidence="18">Host cytoplasm</location>
    </subcellularLocation>
    <text evidence="18">Nuclear at initial phase, cytoplasmic at assembly.</text>
</comment>
<comment type="alternative products">
    <event type="ribosomal frameshifting"/>
    <isoform>
        <id>Q9Q720-1</id>
        <name>Gag-Pol polyprotein</name>
        <sequence type="displayed"/>
    </isoform>
    <isoform>
        <id>Q9Q721-1</id>
        <name>Gag polyprotein</name>
        <sequence type="external"/>
    </isoform>
    <text>Translation results in the formation of the Gag polyprotein most of the time. Ribosomal frameshifting at the gag-pol genes boundary occurs at low frequency and produces the Gag-Pol polyprotein. This strategy of translation probably allows the virus to modulate the quantity of each viral protein. Maintenance of a correct Gag to Gag-Pol ratio is essential for RNA dimerization and viral infectivity.</text>
</comment>
<comment type="domain">
    <molecule>Reverse transcriptase/ribonuclease H</molecule>
    <text evidence="1">RT is structured in five subdomains: finger, palm, thumb, connection and RNase H. Within the palm subdomain, the 'primer grip' region is thought to be involved in the positioning of the primer terminus for accommodating the incoming nucleotide. The RNase H domain stabilizes the association of RT with primer-template.</text>
</comment>
<comment type="domain">
    <molecule>Reverse transcriptase/ribonuclease H</molecule>
    <text evidence="1">The tryptophan repeat motif is involved in RT p66/p51 dimerization (By similarity).</text>
</comment>
<comment type="domain">
    <molecule>Integrase</molecule>
    <text evidence="1">The core domain contains the D-x(n)-D-x(35)-E motif, named for the phylogenetically conserved glutamic acid and aspartic acid residues and the invariant 35 amino acid spacing between the second and third acidic residues. Each acidic residue of the D,D(35)E motif is independently essential for the 3'-processing and strand transfer activities of purified integrase protein.</text>
</comment>
<comment type="PTM">
    <molecule>Gag-Pol polyprotein</molecule>
    <text evidence="5 11">Specific enzymatic cleavages by the viral protease yield mature proteins. The protease is released by autocatalytic cleavage. The polyprotein is cleaved during and after budding, this process is termed maturation. Proteolytic cleavage of p66 RT removes the RNase H domain to yield the p51 RT subunit. Nucleocapsid protein p7 might be further cleaved after virus entry.</text>
</comment>
<comment type="PTM">
    <molecule>Matrix protein p17</molecule>
    <text evidence="5">Tyrosine phosphorylated presumably in the virion by a host kinase. Phosphorylation is apparently not a major regulator of membrane association.</text>
</comment>
<comment type="PTM">
    <molecule>Capsid protein p24</molecule>
    <text evidence="6">Phosphorylated possibly by host MAPK1; this phosphorylation is necessary for Pin1-mediated virion uncoating.</text>
</comment>
<comment type="PTM">
    <molecule>Nucleocapsid protein p7</molecule>
    <text evidence="2">Methylated by host PRMT6, impairing its function by reducing RNA annealing and the initiation of reverse transcription.</text>
</comment>
<comment type="miscellaneous">
    <molecule>Reverse transcriptase/ribonuclease H</molecule>
    <text evidence="1">Error-prone enzyme that lacks a proof-reading function. High mutations rate is a direct consequence of this characteristic. RT also displays frequent template switching leading to high recombination rate. Recombination mostly occurs between homologous regions of the two copackaged RNA genomes. If these two RNA molecules derive from different viral strains, reverse transcription will give rise to highly recombinated proviral DNAs.</text>
</comment>
<comment type="miscellaneous">
    <text>HIV-1 lineages are divided in three main groups, M (for Major), O (for Outlier), and N (for New, or Non-M, Non-O). The vast majority of strains found worldwide belong to the group M. Group O seems to be endemic to and largely confined to Cameroon and neighboring countries in West Central Africa, where these viruses represent a small minority of HIV-1 strains. The group N is represented by a limited number of isolates from Cameroonian persons. The group M is further subdivided in 9 clades or subtypes (A to D, F to H, J and K).</text>
</comment>
<comment type="miscellaneous">
    <text>Resistance to inhibitors associated with mutations are observed both in viral protease and in reverse transcriptase. Most of the time, single mutations confer only a modest reduction in drug susceptibility. Combination of several mutations is usually required to develop a high-level drug resistance. These mutations are predominantly found in clade B viruses and not in other genotypes. They are listed in the clade B representative isolate HXB2 (AC P04585).</text>
</comment>
<comment type="miscellaneous">
    <molecule>Isoform Gag-Pol polyprotein</molecule>
    <text>Produced by -1 ribosomal frameshifting.</text>
</comment>
<comment type="online information" name="HIV drug resistance mutations">
    <link uri="https://www.iasusa.org/hiv-drug-resistance/hiv-drug-resistance-mutations/"/>
</comment>
<comment type="online information" name="hivdb">
    <link uri="https://hivdb.stanford.edu"/>
    <text>HIV drug resistance database</text>
</comment>
<name>POL_HV1V9</name>
<evidence type="ECO:0000250" key="1"/>
<evidence type="ECO:0000250" key="2">
    <source>
        <dbReference type="UniProtKB" id="P03347"/>
    </source>
</evidence>
<evidence type="ECO:0000250" key="3">
    <source>
        <dbReference type="UniProtKB" id="P03366"/>
    </source>
</evidence>
<evidence type="ECO:0000250" key="4">
    <source>
        <dbReference type="UniProtKB" id="P03367"/>
    </source>
</evidence>
<evidence type="ECO:0000250" key="5">
    <source>
        <dbReference type="UniProtKB" id="P04585"/>
    </source>
</evidence>
<evidence type="ECO:0000250" key="6">
    <source>
        <dbReference type="UniProtKB" id="P12493"/>
    </source>
</evidence>
<evidence type="ECO:0000250" key="7">
    <source>
        <dbReference type="UniProtKB" id="P12497"/>
    </source>
</evidence>
<evidence type="ECO:0000255" key="8"/>
<evidence type="ECO:0000255" key="9">
    <source>
        <dbReference type="PROSITE-ProRule" id="PRU00047"/>
    </source>
</evidence>
<evidence type="ECO:0000255" key="10">
    <source>
        <dbReference type="PROSITE-ProRule" id="PRU00275"/>
    </source>
</evidence>
<evidence type="ECO:0000255" key="11">
    <source>
        <dbReference type="PROSITE-ProRule" id="PRU00405"/>
    </source>
</evidence>
<evidence type="ECO:0000255" key="12">
    <source>
        <dbReference type="PROSITE-ProRule" id="PRU00408"/>
    </source>
</evidence>
<evidence type="ECO:0000255" key="13">
    <source>
        <dbReference type="PROSITE-ProRule" id="PRU00450"/>
    </source>
</evidence>
<evidence type="ECO:0000255" key="14">
    <source>
        <dbReference type="PROSITE-ProRule" id="PRU00457"/>
    </source>
</evidence>
<evidence type="ECO:0000255" key="15">
    <source>
        <dbReference type="PROSITE-ProRule" id="PRU00506"/>
    </source>
</evidence>
<evidence type="ECO:0000255" key="16">
    <source>
        <dbReference type="PROSITE-ProRule" id="PRU10094"/>
    </source>
</evidence>
<evidence type="ECO:0000256" key="17">
    <source>
        <dbReference type="SAM" id="MobiDB-lite"/>
    </source>
</evidence>
<evidence type="ECO:0000305" key="18"/>